<dbReference type="EMBL" id="AC013289">
    <property type="protein sequence ID" value="AAG52540.1"/>
    <property type="molecule type" value="Genomic_DNA"/>
</dbReference>
<dbReference type="EMBL" id="CP002684">
    <property type="protein sequence ID" value="AEE34963.1"/>
    <property type="molecule type" value="Genomic_DNA"/>
</dbReference>
<dbReference type="EMBL" id="AY056384">
    <property type="protein sequence ID" value="AAL08240.1"/>
    <property type="molecule type" value="mRNA"/>
</dbReference>
<dbReference type="EMBL" id="AY081706">
    <property type="protein sequence ID" value="AAL87359.1"/>
    <property type="molecule type" value="mRNA"/>
</dbReference>
<dbReference type="PIR" id="G96718">
    <property type="entry name" value="G96718"/>
</dbReference>
<dbReference type="RefSeq" id="NP_564973.1">
    <property type="nucleotide sequence ID" value="NM_105637.3"/>
</dbReference>
<dbReference type="PDB" id="7VP3">
    <property type="method" value="X-ray"/>
    <property type="resolution" value="3.00 A"/>
    <property type="chains" value="C/D/G/I/J/L/N/P=51-113"/>
</dbReference>
<dbReference type="PDB" id="7VP6">
    <property type="method" value="X-ray"/>
    <property type="resolution" value="2.57 A"/>
    <property type="chains" value="D/J=51-113"/>
</dbReference>
<dbReference type="PDBsum" id="7VP3"/>
<dbReference type="PDBsum" id="7VP6"/>
<dbReference type="SMR" id="Q9C9L2"/>
<dbReference type="BioGRID" id="28526">
    <property type="interactions" value="263"/>
</dbReference>
<dbReference type="FunCoup" id="Q9C9L2">
    <property type="interactions" value="44"/>
</dbReference>
<dbReference type="IntAct" id="Q9C9L2">
    <property type="interactions" value="281"/>
</dbReference>
<dbReference type="STRING" id="3702.Q9C9L2"/>
<dbReference type="GlyGen" id="Q9C9L2">
    <property type="glycosylation" value="1 site, 1 O-linked glycan (1 site)"/>
</dbReference>
<dbReference type="iPTMnet" id="Q9C9L2"/>
<dbReference type="PaxDb" id="3702-AT1G69690.1"/>
<dbReference type="EnsemblPlants" id="AT1G69690.1">
    <property type="protein sequence ID" value="AT1G69690.1"/>
    <property type="gene ID" value="AT1G69690"/>
</dbReference>
<dbReference type="GeneID" id="843305"/>
<dbReference type="Gramene" id="AT1G69690.1">
    <property type="protein sequence ID" value="AT1G69690.1"/>
    <property type="gene ID" value="AT1G69690"/>
</dbReference>
<dbReference type="KEGG" id="ath:AT1G69690"/>
<dbReference type="Araport" id="AT1G69690"/>
<dbReference type="TAIR" id="AT1G69690">
    <property type="gene designation" value="TCP15"/>
</dbReference>
<dbReference type="eggNOG" id="ENOG502QU5R">
    <property type="taxonomic scope" value="Eukaryota"/>
</dbReference>
<dbReference type="HOGENOM" id="CLU_025170_0_0_1"/>
<dbReference type="InParanoid" id="Q9C9L2"/>
<dbReference type="OMA" id="NAYRPIL"/>
<dbReference type="OrthoDB" id="1426352at2759"/>
<dbReference type="PhylomeDB" id="Q9C9L2"/>
<dbReference type="PRO" id="PR:Q9C9L2"/>
<dbReference type="Proteomes" id="UP000006548">
    <property type="component" value="Chromosome 1"/>
</dbReference>
<dbReference type="ExpressionAtlas" id="Q9C9L2">
    <property type="expression patterns" value="baseline and differential"/>
</dbReference>
<dbReference type="GO" id="GO:0005634">
    <property type="term" value="C:nucleus"/>
    <property type="evidence" value="ECO:0007669"/>
    <property type="project" value="UniProtKB-SubCell"/>
</dbReference>
<dbReference type="GO" id="GO:0003700">
    <property type="term" value="F:DNA-binding transcription factor activity"/>
    <property type="evidence" value="ECO:0000250"/>
    <property type="project" value="TAIR"/>
</dbReference>
<dbReference type="GO" id="GO:0000976">
    <property type="term" value="F:transcription cis-regulatory region binding"/>
    <property type="evidence" value="ECO:0000353"/>
    <property type="project" value="TAIR"/>
</dbReference>
<dbReference type="GO" id="GO:0051301">
    <property type="term" value="P:cell division"/>
    <property type="evidence" value="ECO:0000316"/>
    <property type="project" value="TAIR"/>
</dbReference>
<dbReference type="GO" id="GO:0007623">
    <property type="term" value="P:circadian rhythm"/>
    <property type="evidence" value="ECO:0000315"/>
    <property type="project" value="TAIR"/>
</dbReference>
<dbReference type="GO" id="GO:0042023">
    <property type="term" value="P:DNA endoreduplication"/>
    <property type="evidence" value="ECO:0000315"/>
    <property type="project" value="TAIR"/>
</dbReference>
<dbReference type="GO" id="GO:0048467">
    <property type="term" value="P:gynoecium development"/>
    <property type="evidence" value="ECO:0000316"/>
    <property type="project" value="TAIR"/>
</dbReference>
<dbReference type="GO" id="GO:0010229">
    <property type="term" value="P:inflorescence development"/>
    <property type="evidence" value="ECO:0000316"/>
    <property type="project" value="TAIR"/>
</dbReference>
<dbReference type="GO" id="GO:0031540">
    <property type="term" value="P:regulation of anthocyanin biosynthetic process"/>
    <property type="evidence" value="ECO:0000316"/>
    <property type="project" value="TAIR"/>
</dbReference>
<dbReference type="GO" id="GO:0006355">
    <property type="term" value="P:regulation of DNA-templated transcription"/>
    <property type="evidence" value="ECO:0000304"/>
    <property type="project" value="TAIR"/>
</dbReference>
<dbReference type="GO" id="GO:0009735">
    <property type="term" value="P:response to cytokinin"/>
    <property type="evidence" value="ECO:0000316"/>
    <property type="project" value="TAIR"/>
</dbReference>
<dbReference type="GO" id="GO:0080086">
    <property type="term" value="P:stamen filament development"/>
    <property type="evidence" value="ECO:0000314"/>
    <property type="project" value="TAIR"/>
</dbReference>
<dbReference type="InterPro" id="IPR017887">
    <property type="entry name" value="TF_TCP_subgr"/>
</dbReference>
<dbReference type="InterPro" id="IPR005333">
    <property type="entry name" value="Transcription_factor_TCP"/>
</dbReference>
<dbReference type="PANTHER" id="PTHR31072:SF170">
    <property type="entry name" value="TRANSCRIPTION FACTOR TCP15-RELATED"/>
    <property type="match status" value="1"/>
</dbReference>
<dbReference type="PANTHER" id="PTHR31072">
    <property type="entry name" value="TRANSCRIPTION FACTOR TCP4-RELATED"/>
    <property type="match status" value="1"/>
</dbReference>
<dbReference type="Pfam" id="PF03634">
    <property type="entry name" value="TCP"/>
    <property type="match status" value="1"/>
</dbReference>
<dbReference type="PROSITE" id="PS51369">
    <property type="entry name" value="TCP"/>
    <property type="match status" value="1"/>
</dbReference>
<accession>Q9C9L2</accession>
<name>TCP15_ARATH</name>
<reference key="1">
    <citation type="journal article" date="2000" name="Nature">
        <title>Sequence and analysis of chromosome 1 of the plant Arabidopsis thaliana.</title>
        <authorList>
            <person name="Theologis A."/>
            <person name="Ecker J.R."/>
            <person name="Palm C.J."/>
            <person name="Federspiel N.A."/>
            <person name="Kaul S."/>
            <person name="White O."/>
            <person name="Alonso J."/>
            <person name="Altafi H."/>
            <person name="Araujo R."/>
            <person name="Bowman C.L."/>
            <person name="Brooks S.Y."/>
            <person name="Buehler E."/>
            <person name="Chan A."/>
            <person name="Chao Q."/>
            <person name="Chen H."/>
            <person name="Cheuk R.F."/>
            <person name="Chin C.W."/>
            <person name="Chung M.K."/>
            <person name="Conn L."/>
            <person name="Conway A.B."/>
            <person name="Conway A.R."/>
            <person name="Creasy T.H."/>
            <person name="Dewar K."/>
            <person name="Dunn P."/>
            <person name="Etgu P."/>
            <person name="Feldblyum T.V."/>
            <person name="Feng J.-D."/>
            <person name="Fong B."/>
            <person name="Fujii C.Y."/>
            <person name="Gill J.E."/>
            <person name="Goldsmith A.D."/>
            <person name="Haas B."/>
            <person name="Hansen N.F."/>
            <person name="Hughes B."/>
            <person name="Huizar L."/>
            <person name="Hunter J.L."/>
            <person name="Jenkins J."/>
            <person name="Johnson-Hopson C."/>
            <person name="Khan S."/>
            <person name="Khaykin E."/>
            <person name="Kim C.J."/>
            <person name="Koo H.L."/>
            <person name="Kremenetskaia I."/>
            <person name="Kurtz D.B."/>
            <person name="Kwan A."/>
            <person name="Lam B."/>
            <person name="Langin-Hooper S."/>
            <person name="Lee A."/>
            <person name="Lee J.M."/>
            <person name="Lenz C.A."/>
            <person name="Li J.H."/>
            <person name="Li Y.-P."/>
            <person name="Lin X."/>
            <person name="Liu S.X."/>
            <person name="Liu Z.A."/>
            <person name="Luros J.S."/>
            <person name="Maiti R."/>
            <person name="Marziali A."/>
            <person name="Militscher J."/>
            <person name="Miranda M."/>
            <person name="Nguyen M."/>
            <person name="Nierman W.C."/>
            <person name="Osborne B.I."/>
            <person name="Pai G."/>
            <person name="Peterson J."/>
            <person name="Pham P.K."/>
            <person name="Rizzo M."/>
            <person name="Rooney T."/>
            <person name="Rowley D."/>
            <person name="Sakano H."/>
            <person name="Salzberg S.L."/>
            <person name="Schwartz J.R."/>
            <person name="Shinn P."/>
            <person name="Southwick A.M."/>
            <person name="Sun H."/>
            <person name="Tallon L.J."/>
            <person name="Tambunga G."/>
            <person name="Toriumi M.J."/>
            <person name="Town C.D."/>
            <person name="Utterback T."/>
            <person name="Van Aken S."/>
            <person name="Vaysberg M."/>
            <person name="Vysotskaia V.S."/>
            <person name="Walker M."/>
            <person name="Wu D."/>
            <person name="Yu G."/>
            <person name="Fraser C.M."/>
            <person name="Venter J.C."/>
            <person name="Davis R.W."/>
        </authorList>
    </citation>
    <scope>NUCLEOTIDE SEQUENCE [LARGE SCALE GENOMIC DNA]</scope>
    <source>
        <strain>cv. Columbia</strain>
    </source>
</reference>
<reference key="2">
    <citation type="journal article" date="2017" name="Plant J.">
        <title>Araport11: a complete reannotation of the Arabidopsis thaliana reference genome.</title>
        <authorList>
            <person name="Cheng C.Y."/>
            <person name="Krishnakumar V."/>
            <person name="Chan A.P."/>
            <person name="Thibaud-Nissen F."/>
            <person name="Schobel S."/>
            <person name="Town C.D."/>
        </authorList>
    </citation>
    <scope>GENOME REANNOTATION</scope>
    <source>
        <strain>cv. Columbia</strain>
    </source>
</reference>
<reference key="3">
    <citation type="journal article" date="2003" name="Science">
        <title>Empirical analysis of transcriptional activity in the Arabidopsis genome.</title>
        <authorList>
            <person name="Yamada K."/>
            <person name="Lim J."/>
            <person name="Dale J.M."/>
            <person name="Chen H."/>
            <person name="Shinn P."/>
            <person name="Palm C.J."/>
            <person name="Southwick A.M."/>
            <person name="Wu H.C."/>
            <person name="Kim C.J."/>
            <person name="Nguyen M."/>
            <person name="Pham P.K."/>
            <person name="Cheuk R.F."/>
            <person name="Karlin-Newmann G."/>
            <person name="Liu S.X."/>
            <person name="Lam B."/>
            <person name="Sakano H."/>
            <person name="Wu T."/>
            <person name="Yu G."/>
            <person name="Miranda M."/>
            <person name="Quach H.L."/>
            <person name="Tripp M."/>
            <person name="Chang C.H."/>
            <person name="Lee J.M."/>
            <person name="Toriumi M.J."/>
            <person name="Chan M.M."/>
            <person name="Tang C.C."/>
            <person name="Onodera C.S."/>
            <person name="Deng J.M."/>
            <person name="Akiyama K."/>
            <person name="Ansari Y."/>
            <person name="Arakawa T."/>
            <person name="Banh J."/>
            <person name="Banno F."/>
            <person name="Bowser L."/>
            <person name="Brooks S.Y."/>
            <person name="Carninci P."/>
            <person name="Chao Q."/>
            <person name="Choy N."/>
            <person name="Enju A."/>
            <person name="Goldsmith A.D."/>
            <person name="Gurjal M."/>
            <person name="Hansen N.F."/>
            <person name="Hayashizaki Y."/>
            <person name="Johnson-Hopson C."/>
            <person name="Hsuan V.W."/>
            <person name="Iida K."/>
            <person name="Karnes M."/>
            <person name="Khan S."/>
            <person name="Koesema E."/>
            <person name="Ishida J."/>
            <person name="Jiang P.X."/>
            <person name="Jones T."/>
            <person name="Kawai J."/>
            <person name="Kamiya A."/>
            <person name="Meyers C."/>
            <person name="Nakajima M."/>
            <person name="Narusaka M."/>
            <person name="Seki M."/>
            <person name="Sakurai T."/>
            <person name="Satou M."/>
            <person name="Tamse R."/>
            <person name="Vaysberg M."/>
            <person name="Wallender E.K."/>
            <person name="Wong C."/>
            <person name="Yamamura Y."/>
            <person name="Yuan S."/>
            <person name="Shinozaki K."/>
            <person name="Davis R.W."/>
            <person name="Theologis A."/>
            <person name="Ecker J.R."/>
        </authorList>
    </citation>
    <scope>NUCLEOTIDE SEQUENCE [LARGE SCALE MRNA]</scope>
    <source>
        <strain>cv. Columbia</strain>
    </source>
</reference>
<reference key="4">
    <citation type="journal article" date="2007" name="Plant Cell">
        <title>Arabidopsis BRANCHED1 acts as an integrator of branching signals within axillary buds.</title>
        <authorList>
            <person name="Aguilar-Martinez J.A."/>
            <person name="Poza-Carrion C."/>
            <person name="Cubas P."/>
        </authorList>
    </citation>
    <scope>GENE FAMILY</scope>
    <scope>NOMENCLATURE</scope>
</reference>
<reference key="5">
    <citation type="journal article" date="2010" name="Plant Cell">
        <title>TCP transcription factors link the regulation of genes encoding mitochondrial proteins with the circadian clock in Arabidopsis thaliana.</title>
        <authorList>
            <person name="Giraud E."/>
            <person name="Ng S."/>
            <person name="Carrie C."/>
            <person name="Duncan O."/>
            <person name="Low J."/>
            <person name="Lee C.P."/>
            <person name="Van Aken O."/>
            <person name="Millar A.H."/>
            <person name="Murcha M."/>
            <person name="Whelan J."/>
        </authorList>
    </citation>
    <scope>INTERACTION WITH APRR5</scope>
    <scope>INDUCTION</scope>
</reference>
<reference key="6">
    <citation type="journal article" date="2011" name="Plant J.">
        <title>TCP14 and TCP15 affect internode length and leaf shape in Arabidopsis.</title>
        <authorList>
            <person name="Kieffer M."/>
            <person name="Master V."/>
            <person name="Waites R."/>
            <person name="Davies B."/>
        </authorList>
    </citation>
    <scope>FUNCTION</scope>
    <scope>TISSUE SPECIFICITY</scope>
    <scope>DISRUPTION PHENOTYPE</scope>
</reference>
<reference key="7">
    <citation type="journal article" date="2012" name="Plant Cell">
        <title>The Arabidopsis O-linked N-acetylglucosamine transferase SPINDLY interacts with class I TCPs to facilitate cytokinin responses in leaves and flowers.</title>
        <authorList>
            <person name="Steiner E."/>
            <person name="Efroni I."/>
            <person name="Gopalraj M."/>
            <person name="Saathoff K."/>
            <person name="Tseng T.S."/>
            <person name="Kieffer M."/>
            <person name="Eshed Y."/>
            <person name="Olszewski N."/>
            <person name="Weiss D."/>
        </authorList>
    </citation>
    <scope>FUNCTION</scope>
    <scope>INTERACTION WITH SEC AND SPY</scope>
</reference>
<reference key="8">
    <citation type="journal article" date="2014" name="J. Genet. Genomics">
        <title>SPOROCYTELESS is a novel embryophyte-specific transcription repressor that interacts with TPL and TCP proteins in Arabidopsis.</title>
        <authorList>
            <person name="Chen G.H."/>
            <person name="Sun J.Y."/>
            <person name="Liu M."/>
            <person name="Liu J."/>
            <person name="Yang W.C."/>
        </authorList>
    </citation>
    <scope>INTERACTION WITH SPL</scope>
    <scope>TISSUE SPECIFICITY</scope>
</reference>
<reference key="9">
    <citation type="journal article" date="2014" name="Plant J.">
        <title>The Arabidopsis immune adaptor SRFR1 interacts with TCP transcription factors that redundantly contribute to effector-triggered immunity.</title>
        <authorList>
            <person name="Kim S.H."/>
            <person name="Son G.H."/>
            <person name="Bhattacharjee S."/>
            <person name="Kim H.J."/>
            <person name="Nam J.C."/>
            <person name="Nguyen P.D."/>
            <person name="Hong J.C."/>
            <person name="Gassmann W."/>
        </authorList>
    </citation>
    <scope>FUNCTION</scope>
    <scope>INTERACTION WITH SRFR1</scope>
</reference>
<reference key="10">
    <citation type="journal article" date="2015" name="Mol. Plant">
        <title>TCP14 and TCP15 mediate the promotion of seed germination by gibberellins in Arabidopsis thaliana.</title>
        <authorList>
            <person name="Resentini F."/>
            <person name="Felipo-Benavent A."/>
            <person name="Colombo L."/>
            <person name="Blazquez M.A."/>
            <person name="Alabadi D."/>
            <person name="Masiero S."/>
        </authorList>
    </citation>
    <scope>FUNCTION</scope>
    <scope>INTERACTION WITH GAI AND RGL2</scope>
    <scope>TISSUE SPECIFICITY</scope>
    <scope>INDUCTION</scope>
    <scope>DISRUPTION PHENOTYPE</scope>
</reference>
<reference key="11">
    <citation type="journal article" date="2015" name="Plant Cell">
        <title>The ubiquitin receptors DA1, DAR1, and DAR2 redundantly regulate endoreduplication by modulating the stability of TCP14/15 in Arabidopsis.</title>
        <authorList>
            <person name="Peng Y."/>
            <person name="Chen L."/>
            <person name="Lu Y."/>
            <person name="Wu Y."/>
            <person name="Dumenil J."/>
            <person name="Zhu Z."/>
            <person name="Bevan M.W."/>
            <person name="Li Y."/>
        </authorList>
    </citation>
    <scope>FUNCTION</scope>
    <scope>INTERACTION WITH DA1; DAR1 AND DAR2</scope>
</reference>
<reference key="12">
    <citation type="journal article" date="2015" name="Plant J.">
        <title>TCP15 modulates cytokinin and auxin responses during gynoecium development in Arabidopsis.</title>
        <authorList>
            <person name="Lucero L.E."/>
            <person name="Uberti-Manassero N.G."/>
            <person name="Arce A.L."/>
            <person name="Colombatti F."/>
            <person name="Alemano S.G."/>
            <person name="Gonzalez D.H."/>
        </authorList>
    </citation>
    <scope>FUNCTION</scope>
    <scope>INDUCTION BY CYTOKININ</scope>
</reference>
<reference key="13">
    <citation type="journal article" date="2016" name="Plant Physiol.">
        <title>Redox-dependent modulation of anthocyanin biosynthesis by the TCP transcription factor TCP15 during exposure to high light intensity conditions in Arabidopsis.</title>
        <authorList>
            <person name="Viola I.L."/>
            <person name="Camoirano A."/>
            <person name="Gonzalez D.H."/>
        </authorList>
    </citation>
    <scope>FUNCTION</scope>
</reference>
<reference key="14">
    <citation type="journal article" date="2017" name="Front. Plant Sci.">
        <title>Arabidopsis TCP transcription factors interact with the SUMO conjugating machinery in nuclear foci.</title>
        <authorList>
            <person name="Mazur M.J."/>
            <person name="Spears B.J."/>
            <person name="Djajasaputra A."/>
            <person name="van der Gragt M."/>
            <person name="Vlachakis G."/>
            <person name="Beerens B."/>
            <person name="Gassmann W."/>
            <person name="van den Burg H.A."/>
        </authorList>
    </citation>
    <scope>INTERACTION WITH SCE1</scope>
    <scope>SUBCELLULAR LOCATION</scope>
</reference>
<reference key="15">
    <citation type="journal article" date="2018" name="Plant J.">
        <title>MOS1 functions closely with TCP transcription factors to modulate immunity and cell cycle in Arabidopsis.</title>
        <authorList>
            <person name="Zhang N."/>
            <person name="Wang Z."/>
            <person name="Bao Z."/>
            <person name="Yang L."/>
            <person name="Wu D."/>
            <person name="Shu X."/>
            <person name="Hua J."/>
        </authorList>
    </citation>
    <scope>INTERACTION WITH MOS1</scope>
</reference>
<protein>
    <recommendedName>
        <fullName evidence="16">Transcription factor TCP15</fullName>
        <shortName evidence="15">AtTCP15</shortName>
    </recommendedName>
</protein>
<comment type="function">
    <text evidence="4 5 6 8 9 10 11">Transcription factor involved the regulation of plant development. Together with TCP14, modulates plant stature by promoting cell division in young internodes. Represses cell proliferation in developing leaf blade and specific floral tissues (PubMed:21668538). Together with TCP15, acts downstream of gibberellin (GA), and the stratification pathways that promote seed germination. Involved in the control of cell proliferation at the root apical meristem (RAM) by regulating the activity of CYCB1-1 (PubMed:25655823). Acts together with SPY to promote cytokinin responses that affect leaf shape and trichome development in flowers (PubMed:22267487). Involved in gynoecium and silique development. Modulates the development of the different tissues of the gynoecium through its participation in auxin and cytokinin responses. Modulates the expression of the cytokinin-responsive genes ARR7 and ARR15. May repress the expression of the auxin biosynthetic genes YUC1 and YUC4 (PubMed:26303297). Acts as negative regulator of anthocyanin accumulation under high light conditions. Modulates the expression of transcription factors involved in the induction of anthocyanin biosynthesis genes (PubMed:26574599). Transcription factor involved in the regulation of endoreduplication. Represses endoreduplication by activating the gene expression of the key cell-cycle regulators RBR1 and CYCA2-3 (PubMed:25757472). Regulates the expression of the defense gene pathogenesis-related protein 2 (PR2) in antagonism to SRFR1, a negative regulator of effector-triggered immunity (PubMed:24689742).</text>
</comment>
<comment type="subunit">
    <text evidence="3 5 6 7 8 9 12 13">Interacts with APRR5 (PubMed:21183706). Interacts with SPY (PubMed:22267487). Interacts with SPL (PubMed:25527103). Interacts with SRFR1 (PubMed:24689742). Interacts with GAI and RGL2 (PubMed:25655823). Interacts with DA1, DAR1 and DAR2 (PubMed:25757472). Interacts with SCE1 (PubMed:29250092). Interacts with MOS1 (PubMed:29086441).</text>
</comment>
<comment type="interaction">
    <interactant intactId="EBI-4426144">
        <id>Q9C9L2</id>
    </interactant>
    <interactant intactId="EBI-617501">
        <id>Q9LPW7</id>
        <label>AFB3</label>
    </interactant>
    <organismsDiffer>false</organismsDiffer>
    <experiments>3</experiments>
</comment>
<comment type="interaction">
    <interactant intactId="EBI-4426144">
        <id>Q9C9L2</id>
    </interactant>
    <interactant intactId="EBI-2363348">
        <id>Q9FLI3</id>
        <label>AHG1</label>
    </interactant>
    <organismsDiffer>false</organismsDiffer>
    <experiments>3</experiments>
</comment>
<comment type="interaction">
    <interactant intactId="EBI-4426144">
        <id>Q9C9L2</id>
    </interactant>
    <interactant intactId="EBI-592003">
        <id>P35631</id>
        <label>AP1</label>
    </interactant>
    <organismsDiffer>false</organismsDiffer>
    <experiments>3</experiments>
</comment>
<comment type="interaction">
    <interactant intactId="EBI-4426144">
        <id>Q9C9L2</id>
    </interactant>
    <interactant intactId="EBI-1100967">
        <id>Q7G8V2</id>
        <label>ARR15</label>
    </interactant>
    <organismsDiffer>false</organismsDiffer>
    <experiments>3</experiments>
</comment>
<comment type="interaction">
    <interactant intactId="EBI-4426144">
        <id>Q9C9L2</id>
    </interactant>
    <interactant intactId="EBI-1100982">
        <id>Q9SHC2</id>
        <label>ARR16</label>
    </interactant>
    <organismsDiffer>false</organismsDiffer>
    <experiments>3</experiments>
</comment>
<comment type="interaction">
    <interactant intactId="EBI-4426144">
        <id>Q9C9L2</id>
    </interactant>
    <interactant intactId="EBI-1101028">
        <id>Q9ZWJ9</id>
        <label>ARR2</label>
    </interactant>
    <organismsDiffer>false</organismsDiffer>
    <experiments>3</experiments>
</comment>
<comment type="interaction">
    <interactant intactId="EBI-4426144">
        <id>Q9C9L2</id>
    </interactant>
    <interactant intactId="EBI-1770344">
        <id>Q9ZWS9</id>
        <label>ARR3</label>
    </interactant>
    <organismsDiffer>false</organismsDiffer>
    <experiments>3</experiments>
</comment>
<comment type="interaction">
    <interactant intactId="EBI-4426144">
        <id>Q9C9L2</id>
    </interactant>
    <interactant intactId="EBI-1100901">
        <id>Q9ZWS6</id>
        <label>ARR6</label>
    </interactant>
    <organismsDiffer>false</organismsDiffer>
    <experiments>3</experiments>
</comment>
<comment type="interaction">
    <interactant intactId="EBI-4426144">
        <id>Q9C9L2</id>
    </interactant>
    <interactant intactId="EBI-1100933">
        <id>O80365</id>
        <label>ARR8</label>
    </interactant>
    <organismsDiffer>false</organismsDiffer>
    <experiments>3</experiments>
</comment>
<comment type="interaction">
    <interactant intactId="EBI-4426144">
        <id>Q9C9L2</id>
    </interactant>
    <interactant intactId="EBI-1100950">
        <id>O80366</id>
        <label>ARR9</label>
    </interactant>
    <organismsDiffer>false</organismsDiffer>
    <experiments>3</experiments>
</comment>
<comment type="interaction">
    <interactant intactId="EBI-4426144">
        <id>Q9C9L2</id>
    </interactant>
    <interactant intactId="EBI-1798250">
        <id>Q39011</id>
        <label>ASK7</label>
    </interactant>
    <organismsDiffer>false</organismsDiffer>
    <experiments>3</experiments>
</comment>
<comment type="interaction">
    <interactant intactId="EBI-4426144">
        <id>Q9C9L2</id>
    </interactant>
    <interactant intactId="EBI-2430550">
        <id>Q9LNV5</id>
        <label>At1g07360</label>
    </interactant>
    <organismsDiffer>false</organismsDiffer>
    <experiments>3</experiments>
</comment>
<comment type="interaction">
    <interactant intactId="EBI-4426144">
        <id>Q9C9L2</id>
    </interactant>
    <interactant intactId="EBI-15196671">
        <id>Q7X887</id>
        <label>At2g02060</label>
    </interactant>
    <organismsDiffer>false</organismsDiffer>
    <experiments>3</experiments>
</comment>
<comment type="interaction">
    <interactant intactId="EBI-4426144">
        <id>Q9C9L2</id>
    </interactant>
    <interactant intactId="EBI-25522944">
        <id>Q9ZT48</id>
        <label>ATE1</label>
    </interactant>
    <organismsDiffer>false</organismsDiffer>
    <experiments>3</experiments>
</comment>
<comment type="interaction">
    <interactant intactId="EBI-4426144">
        <id>Q9C9L2</id>
    </interactant>
    <interactant intactId="EBI-4475455">
        <id>Q9FG01</id>
        <label>ATO</label>
    </interactant>
    <organismsDiffer>false</organismsDiffer>
    <experiments>3</experiments>
</comment>
<comment type="interaction">
    <interactant intactId="EBI-4426144">
        <id>Q9C9L2</id>
    </interactant>
    <interactant intactId="EBI-4424312">
        <id>Q93VJ4</id>
        <label>BEE2</label>
    </interactant>
    <organismsDiffer>false</organismsDiffer>
    <experiments>3</experiments>
</comment>
<comment type="interaction">
    <interactant intactId="EBI-4426144">
        <id>Q9C9L2</id>
    </interactant>
    <interactant intactId="EBI-4427748">
        <id>Q7XJU2</id>
        <label>BHLH153</label>
    </interactant>
    <organismsDiffer>false</organismsDiffer>
    <experiments>3</experiments>
</comment>
<comment type="interaction">
    <interactant intactId="EBI-4426144">
        <id>Q9C9L2</id>
    </interactant>
    <interactant intactId="EBI-4437532">
        <id>Q9SN74</id>
        <label>BHLH47</label>
    </interactant>
    <organismsDiffer>false</organismsDiffer>
    <experiments>3</experiments>
</comment>
<comment type="interaction">
    <interactant intactId="EBI-4426144">
        <id>Q9C9L2</id>
    </interactant>
    <interactant intactId="EBI-15192111">
        <id>Q8S3D1</id>
        <label>BHLH68</label>
    </interactant>
    <organismsDiffer>false</organismsDiffer>
    <experiments>3</experiments>
</comment>
<comment type="interaction">
    <interactant intactId="EBI-4426144">
        <id>Q9C9L2</id>
    </interactant>
    <interactant intactId="EBI-1803261">
        <id>Q8S307</id>
        <label>BZR1</label>
    </interactant>
    <organismsDiffer>false</organismsDiffer>
    <experiments>6</experiments>
</comment>
<comment type="interaction">
    <interactant intactId="EBI-4426144">
        <id>Q9C9L2</id>
    </interactant>
    <interactant intactId="EBI-962511">
        <id>A9LNK9</id>
        <label>CPSF30</label>
    </interactant>
    <organismsDiffer>false</organismsDiffer>
    <experiments>3</experiments>
</comment>
<comment type="interaction">
    <interactant intactId="EBI-4426144">
        <id>Q9C9L2</id>
    </interactant>
    <interactant intactId="EBI-4456165">
        <id>Q9LFR7</id>
        <label>CXE17</label>
    </interactant>
    <organismsDiffer>false</organismsDiffer>
    <experiments>3</experiments>
</comment>
<comment type="interaction">
    <interactant intactId="EBI-4426144">
        <id>Q9C9L2</id>
    </interactant>
    <interactant intactId="EBI-1390454">
        <id>Q9SU72</id>
        <label>EDS1</label>
    </interactant>
    <organismsDiffer>false</organismsDiffer>
    <experiments>3</experiments>
</comment>
<comment type="interaction">
    <interactant intactId="EBI-4426144">
        <id>Q9C9L2</id>
    </interactant>
    <interactant intactId="EBI-15198075">
        <id>Q9ZWA2</id>
        <label>ERF10</label>
    </interactant>
    <organismsDiffer>false</organismsDiffer>
    <experiments>3</experiments>
</comment>
<comment type="interaction">
    <interactant intactId="EBI-4426144">
        <id>Q9C9L2</id>
    </interactant>
    <interactant intactId="EBI-25523668">
        <id>Q9C5I3</id>
        <label>ERF11</label>
    </interactant>
    <organismsDiffer>false</organismsDiffer>
    <experiments>3</experiments>
</comment>
<comment type="interaction">
    <interactant intactId="EBI-4426144">
        <id>Q9C9L2</id>
    </interactant>
    <interactant intactId="EBI-4446727">
        <id>Q94ID6</id>
        <label>ERF12</label>
    </interactant>
    <organismsDiffer>false</organismsDiffer>
    <experiments>6</experiments>
</comment>
<comment type="interaction">
    <interactant intactId="EBI-4426144">
        <id>Q9C9L2</id>
    </interactant>
    <interactant intactId="EBI-966009">
        <id>O80340</id>
        <label>ERF4</label>
    </interactant>
    <organismsDiffer>false</organismsDiffer>
    <experiments>6</experiments>
</comment>
<comment type="interaction">
    <interactant intactId="EBI-4426144">
        <id>Q9C9L2</id>
    </interactant>
    <interactant intactId="EBI-2000137">
        <id>Q9MAI5</id>
        <label>ERF8</label>
    </interactant>
    <organismsDiffer>false</organismsDiffer>
    <experiments>3</experiments>
</comment>
<comment type="interaction">
    <interactant intactId="EBI-4426144">
        <id>Q9C9L2</id>
    </interactant>
    <interactant intactId="EBI-4431933">
        <id>Q9FE67</id>
        <label>ERF9</label>
    </interactant>
    <organismsDiffer>false</organismsDiffer>
    <experiments>3</experiments>
</comment>
<comment type="interaction">
    <interactant intactId="EBI-4426144">
        <id>Q9C9L2</id>
    </interactant>
    <interactant intactId="EBI-1235922">
        <id>Q8RWQ8</id>
        <label>FBX14</label>
    </interactant>
    <organismsDiffer>false</organismsDiffer>
    <experiments>3</experiments>
</comment>
<comment type="interaction">
    <interactant intactId="EBI-4426144">
        <id>Q9C9L2</id>
    </interactant>
    <interactant intactId="EBI-1396623">
        <id>Q8L8A5</id>
        <label>GIF1</label>
    </interactant>
    <organismsDiffer>false</organismsDiffer>
    <experiments>3</experiments>
</comment>
<comment type="interaction">
    <interactant intactId="EBI-4426144">
        <id>Q9C9L2</id>
    </interactant>
    <interactant intactId="EBI-15194063">
        <id>Q9C9H1</id>
        <label>GIS3</label>
    </interactant>
    <organismsDiffer>false</organismsDiffer>
    <experiments>3</experiments>
</comment>
<comment type="interaction">
    <interactant intactId="EBI-4426144">
        <id>Q9C9L2</id>
    </interactant>
    <interactant intactId="EBI-1396893">
        <id>Q8L8A8</id>
        <label>GRF2</label>
    </interactant>
    <organismsDiffer>false</organismsDiffer>
    <experiments>3</experiments>
</comment>
<comment type="interaction">
    <interactant intactId="EBI-4426144">
        <id>Q9C9L2</id>
    </interactant>
    <interactant intactId="EBI-1536734">
        <id>Q9LXD8</id>
        <label>HEC3</label>
    </interactant>
    <organismsDiffer>false</organismsDiffer>
    <experiments>4</experiments>
</comment>
<comment type="interaction">
    <interactant intactId="EBI-4426144">
        <id>Q9C9L2</id>
    </interactant>
    <interactant intactId="EBI-630505">
        <id>P49677</id>
        <label>IAA1</label>
    </interactant>
    <organismsDiffer>false</organismsDiffer>
    <experiments>3</experiments>
</comment>
<comment type="interaction">
    <interactant intactId="EBI-4426144">
        <id>Q9C9L2</id>
    </interactant>
    <interactant intactId="EBI-3946434">
        <id>Q38828</id>
        <label>IAA10</label>
    </interactant>
    <organismsDiffer>false</organismsDiffer>
    <experiments>3</experiments>
</comment>
<comment type="interaction">
    <interactant intactId="EBI-4426144">
        <id>Q9C9L2</id>
    </interactant>
    <interactant intactId="EBI-2295562">
        <id>Q38832</id>
        <label>IAA14</label>
    </interactant>
    <organismsDiffer>false</organismsDiffer>
    <experiments>3</experiments>
</comment>
<comment type="interaction">
    <interactant intactId="EBI-4426144">
        <id>Q9C9L2</id>
    </interactant>
    <interactant intactId="EBI-25524519">
        <id>A0A2H1ZEF6</id>
        <label>IAA15</label>
    </interactant>
    <organismsDiffer>false</organismsDiffer>
    <experiments>3</experiments>
</comment>
<comment type="interaction">
    <interactant intactId="EBI-4426144">
        <id>Q9C9L2</id>
    </interactant>
    <interactant intactId="EBI-632243">
        <id>P93830</id>
        <label>IAA17</label>
    </interactant>
    <organismsDiffer>false</organismsDiffer>
    <experiments>6</experiments>
</comment>
<comment type="interaction">
    <interactant intactId="EBI-4426144">
        <id>Q9C9L2</id>
    </interactant>
    <interactant intactId="EBI-632272">
        <id>O24410</id>
        <label>IAA20</label>
    </interactant>
    <organismsDiffer>false</organismsDiffer>
    <experiments>3</experiments>
</comment>
<comment type="interaction">
    <interactant intactId="EBI-4426144">
        <id>Q9C9L2</id>
    </interactant>
    <interactant intactId="EBI-3946677">
        <id>Q9ZSY8</id>
        <label>IAA27</label>
    </interactant>
    <organismsDiffer>false</organismsDiffer>
    <experiments>3</experiments>
</comment>
<comment type="interaction">
    <interactant intactId="EBI-4426144">
        <id>Q9C9L2</id>
    </interactant>
    <interactant intactId="EBI-3946697">
        <id>Q93WC4</id>
        <label>IAA29</label>
    </interactant>
    <organismsDiffer>false</organismsDiffer>
    <experiments>3</experiments>
</comment>
<comment type="interaction">
    <interactant intactId="EBI-4426144">
        <id>Q9C9L2</id>
    </interactant>
    <interactant intactId="EBI-307174">
        <id>Q38822</id>
        <label>IAA3</label>
    </interactant>
    <organismsDiffer>false</organismsDiffer>
    <experiments>3</experiments>
</comment>
<comment type="interaction">
    <interactant intactId="EBI-4426144">
        <id>Q9C9L2</id>
    </interactant>
    <interactant intactId="EBI-3946448">
        <id>Q8RYC6</id>
        <label>IAA32</label>
    </interactant>
    <organismsDiffer>false</organismsDiffer>
    <experiments>3</experiments>
</comment>
<comment type="interaction">
    <interactant intactId="EBI-4426144">
        <id>Q9C9L2</id>
    </interactant>
    <interactant intactId="EBI-3946739">
        <id>Q9FKM7</id>
        <label>IAA33</label>
    </interactant>
    <organismsDiffer>false</organismsDiffer>
    <experiments>3</experiments>
</comment>
<comment type="interaction">
    <interactant intactId="EBI-4426144">
        <id>Q9C9L2</id>
    </interactant>
    <interactant intactId="EBI-3946459">
        <id>Q9C5X0</id>
        <label>IAA34</label>
    </interactant>
    <organismsDiffer>false</organismsDiffer>
    <experiments>5</experiments>
</comment>
<comment type="interaction">
    <interactant intactId="EBI-4426144">
        <id>Q9C9L2</id>
    </interactant>
    <interactant intactId="EBI-3946487">
        <id>P33078</id>
        <label>IAA5</label>
    </interactant>
    <organismsDiffer>false</organismsDiffer>
    <experiments>3</experiments>
</comment>
<comment type="interaction">
    <interactant intactId="EBI-4426144">
        <id>Q9C9L2</id>
    </interactant>
    <interactant intactId="EBI-1554124">
        <id>Q38824</id>
        <label>IAA6</label>
    </interactant>
    <organismsDiffer>false</organismsDiffer>
    <experiments>3</experiments>
</comment>
<comment type="interaction">
    <interactant intactId="EBI-4426144">
        <id>Q9C9L2</id>
    </interactant>
    <interactant intactId="EBI-632200">
        <id>Q38826</id>
        <label>IAA8</label>
    </interactant>
    <organismsDiffer>false</organismsDiffer>
    <experiments>3</experiments>
</comment>
<comment type="interaction">
    <interactant intactId="EBI-4426144">
        <id>Q9C9L2</id>
    </interactant>
    <interactant intactId="EBI-632216">
        <id>Q38827</id>
        <label>IAA9</label>
    </interactant>
    <organismsDiffer>false</organismsDiffer>
    <experiments>3</experiments>
</comment>
<comment type="interaction">
    <interactant intactId="EBI-4426144">
        <id>Q9C9L2</id>
    </interactant>
    <interactant intactId="EBI-2356227">
        <id>Q8L5T5</id>
        <label>LBD15</label>
    </interactant>
    <organismsDiffer>false</organismsDiffer>
    <experiments>3</experiments>
</comment>
<comment type="interaction">
    <interactant intactId="EBI-4426144">
        <id>Q9C9L2</id>
    </interactant>
    <interactant intactId="EBI-15193585">
        <id>Q9SN23</id>
        <label>LBD38</label>
    </interactant>
    <organismsDiffer>false</organismsDiffer>
    <experiments>3</experiments>
</comment>
<comment type="interaction">
    <interactant intactId="EBI-4426144">
        <id>Q9C9L2</id>
    </interactant>
    <interactant intactId="EBI-15191571">
        <id>Q4PSE2</id>
        <label>NFYC8</label>
    </interactant>
    <organismsDiffer>false</organismsDiffer>
    <experiments>4</experiments>
</comment>
<comment type="interaction">
    <interactant intactId="EBI-4426144">
        <id>Q9C9L2</id>
    </interactant>
    <interactant intactId="EBI-541099">
        <id>Q9FNZ5</id>
        <label>NIMIN-1</label>
    </interactant>
    <organismsDiffer>false</organismsDiffer>
    <experiments>3</experiments>
</comment>
<comment type="interaction">
    <interactant intactId="EBI-4426144">
        <id>Q9C9L2</id>
    </interactant>
    <interactant intactId="EBI-541107">
        <id>Q9LUA3</id>
        <label>NIMIN-2</label>
    </interactant>
    <organismsDiffer>false</organismsDiffer>
    <experiments>3</experiments>
</comment>
<comment type="interaction">
    <interactant intactId="EBI-4426144">
        <id>Q9C9L2</id>
    </interactant>
    <interactant intactId="EBI-541115">
        <id>Q9FNZ4</id>
        <label>NIMIN-3</label>
    </interactant>
    <organismsDiffer>false</organismsDiffer>
    <experiments>3</experiments>
</comment>
<comment type="interaction">
    <interactant intactId="EBI-4426144">
        <id>Q9C9L2</id>
    </interactant>
    <interactant intactId="EBI-25512318">
        <id>O23078</id>
        <label>PLDBETA2</label>
    </interactant>
    <organismsDiffer>false</organismsDiffer>
    <experiments>3</experiments>
</comment>
<comment type="interaction">
    <interactant intactId="EBI-4426144">
        <id>Q9C9L2</id>
    </interactant>
    <interactant intactId="EBI-2363192">
        <id>Q8S8E3</id>
        <label>PYL6</label>
    </interactant>
    <organismsDiffer>false</organismsDiffer>
    <experiments>3</experiments>
</comment>
<comment type="interaction">
    <interactant intactId="EBI-4426144">
        <id>Q9C9L2</id>
    </interactant>
    <interactant intactId="EBI-2429535">
        <id>Q9FGM1</id>
        <label>PYL8</label>
    </interactant>
    <organismsDiffer>false</organismsDiffer>
    <experiments>3</experiments>
</comment>
<comment type="interaction">
    <interactant intactId="EBI-4426144">
        <id>Q9C9L2</id>
    </interactant>
    <interactant intactId="EBI-2349513">
        <id>Q84MC7</id>
        <label>PYL9</label>
    </interactant>
    <organismsDiffer>false</organismsDiffer>
    <experiments>3</experiments>
</comment>
<comment type="interaction">
    <interactant intactId="EBI-4426144">
        <id>Q9C9L2</id>
    </interactant>
    <interactant intactId="EBI-15198339">
        <id>Q9FG68</id>
        <label>RAX1</label>
    </interactant>
    <organismsDiffer>false</organismsDiffer>
    <experiments>3</experiments>
</comment>
<comment type="interaction">
    <interactant intactId="EBI-4426144">
        <id>Q9C9L2</id>
    </interactant>
    <interactant intactId="EBI-4425094">
        <id>O82239</id>
        <label>RFI2</label>
    </interactant>
    <organismsDiffer>false</organismsDiffer>
    <experiments>3</experiments>
</comment>
<comment type="interaction">
    <interactant intactId="EBI-4426144">
        <id>Q9C9L2</id>
    </interactant>
    <interactant intactId="EBI-1238472">
        <id>Q9S7H5</id>
        <label>SCL21</label>
    </interactant>
    <organismsDiffer>false</organismsDiffer>
    <experiments>3</experiments>
</comment>
<comment type="interaction">
    <interactant intactId="EBI-4426144">
        <id>Q9C9L2</id>
    </interactant>
    <interactant intactId="EBI-1113588">
        <id>O81836</id>
        <label>SPL</label>
    </interactant>
    <organismsDiffer>false</organismsDiffer>
    <experiments>3</experiments>
</comment>
<comment type="interaction">
    <interactant intactId="EBI-4426144">
        <id>Q9C9L2</id>
    </interactant>
    <interactant intactId="EBI-15194151">
        <id>Q9FXH7</id>
        <label>SRS7</label>
    </interactant>
    <organismsDiffer>false</organismsDiffer>
    <experiments>3</experiments>
</comment>
<comment type="interaction">
    <interactant intactId="EBI-4426144">
        <id>Q9C9L2</id>
    </interactant>
    <interactant intactId="EBI-15192251">
        <id>Q9FME3</id>
        <label>TCP5</label>
    </interactant>
    <organismsDiffer>false</organismsDiffer>
    <experiments>4</experiments>
</comment>
<comment type="interaction">
    <interactant intactId="EBI-4426144">
        <id>Q9C9L2</id>
    </interactant>
    <interactant intactId="EBI-3134124">
        <id>Q9C518</id>
        <label>TCP8</label>
    </interactant>
    <organismsDiffer>false</organismsDiffer>
    <experiments>4</experiments>
</comment>
<comment type="interaction">
    <interactant intactId="EBI-4426144">
        <id>Q9C9L2</id>
    </interactant>
    <interactant intactId="EBI-9838721">
        <id>O64647</id>
        <label>TCP9</label>
    </interactant>
    <organismsDiffer>false</organismsDiffer>
    <experiments>3</experiments>
</comment>
<comment type="interaction">
    <interactant intactId="EBI-4426144">
        <id>Q9C9L2</id>
    </interactant>
    <interactant intactId="EBI-15403807">
        <id>O64687</id>
        <label>TIFY 5B</label>
    </interactant>
    <organismsDiffer>false</organismsDiffer>
    <experiments>3</experiments>
</comment>
<comment type="interaction">
    <interactant intactId="EBI-4426144">
        <id>Q9C9L2</id>
    </interactant>
    <interactant intactId="EBI-1388539">
        <id>Q9LMA8</id>
        <label>TIFY10A</label>
    </interactant>
    <organismsDiffer>false</organismsDiffer>
    <experiments>3</experiments>
</comment>
<comment type="interaction">
    <interactant intactId="EBI-4426144">
        <id>Q9C9L2</id>
    </interactant>
    <interactant intactId="EBI-1792563">
        <id>Q9S7M2</id>
        <label>TIFY10B</label>
    </interactant>
    <organismsDiffer>false</organismsDiffer>
    <experiments>3</experiments>
</comment>
<comment type="interaction">
    <interactant intactId="EBI-4426144">
        <id>Q9C9L2</id>
    </interactant>
    <interactant intactId="EBI-2312095">
        <id>Q9LDU5</id>
        <label>TIFY11A</label>
    </interactant>
    <organismsDiffer>false</organismsDiffer>
    <experiments>3</experiments>
</comment>
<comment type="interaction">
    <interactant intactId="EBI-4426144">
        <id>Q9C9L2</id>
    </interactant>
    <interactant intactId="EBI-2312120">
        <id>Q9C9E3</id>
        <label>TIFY11B</label>
    </interactant>
    <organismsDiffer>false</organismsDiffer>
    <experiments>3</experiments>
</comment>
<comment type="interaction">
    <interactant intactId="EBI-4426144">
        <id>Q9C9L2</id>
    </interactant>
    <interactant intactId="EBI-2312143">
        <id>Q8LBM2</id>
        <label>TIFY5A</label>
    </interactant>
    <organismsDiffer>false</organismsDiffer>
    <experiments>3</experiments>
</comment>
<comment type="interaction">
    <interactant intactId="EBI-4426144">
        <id>Q9C9L2</id>
    </interactant>
    <interactant intactId="EBI-1792431">
        <id>Q9LVI4</id>
        <label>TIFY6B</label>
    </interactant>
    <organismsDiffer>false</organismsDiffer>
    <experiments>3</experiments>
</comment>
<comment type="interaction">
    <interactant intactId="EBI-4426144">
        <id>Q9C9L2</id>
    </interactant>
    <interactant intactId="EBI-1792583">
        <id>Q8W4J8</id>
        <label>TIFY7</label>
    </interactant>
    <organismsDiffer>false</organismsDiffer>
    <experiments>3</experiments>
</comment>
<comment type="interaction">
    <interactant intactId="EBI-4426144">
        <id>Q9C9L2</id>
    </interactant>
    <interactant intactId="EBI-2312172">
        <id>Q93ZM9</id>
        <label>TIFY9</label>
    </interactant>
    <organismsDiffer>false</organismsDiffer>
    <experiments>3</experiments>
</comment>
<comment type="interaction">
    <interactant intactId="EBI-4426144">
        <id>Q9C9L2</id>
    </interactant>
    <interactant intactId="EBI-4459694">
        <id>Q6X7J9</id>
        <label>WOX4</label>
    </interactant>
    <organismsDiffer>false</organismsDiffer>
    <experiments>3</experiments>
</comment>
<comment type="interaction">
    <interactant intactId="EBI-4426144">
        <id>Q9C9L2</id>
    </interactant>
    <interactant intactId="EBI-2119269">
        <id>Q9SB92</id>
        <label>WUS</label>
    </interactant>
    <organismsDiffer>false</organismsDiffer>
    <experiments>3</experiments>
</comment>
<comment type="interaction">
    <interactant intactId="EBI-4426144">
        <id>Q9C9L2</id>
    </interactant>
    <interactant intactId="EBI-1113627">
        <id>O22152</id>
        <label>YAB1</label>
    </interactant>
    <organismsDiffer>false</organismsDiffer>
    <experiments>3</experiments>
</comment>
<comment type="interaction">
    <interactant intactId="EBI-4426144">
        <id>Q9C9L2</id>
    </interactant>
    <interactant intactId="EBI-1115523">
        <id>Q9LDT3</id>
        <label>YAB4</label>
    </interactant>
    <organismsDiffer>false</organismsDiffer>
    <experiments>5</experiments>
</comment>
<comment type="subcellular location">
    <subcellularLocation>
        <location evidence="1 13">Nucleus</location>
    </subcellularLocation>
</comment>
<comment type="tissue specificity">
    <text evidence="4 7 8">Expressed in archespores, pollen mother cell, ovule primordia and megaspore mother cells (PubMed:25527103). Expressed in young proliferating tissues (PubMed:21668538). Expressed in developing embryos, and seeds during germination (PubMed:25655823).</text>
</comment>
<comment type="induction">
    <text evidence="3 8 10">Circadian-regulation with the lowest expression in the middle of the dark period (PubMed:21183706). Induced during seed imbibition (PubMed:25655823). Induced by cytokinin (PubMed:26303297).</text>
</comment>
<comment type="disruption phenotype">
    <text evidence="4 8">Reduction in inflorescence height and pedicel length (PubMed:21668538). Delayed germination (PubMed:25655823).</text>
</comment>
<comment type="miscellaneous">
    <text evidence="5">Plants overexpressing TCP14 exhibit altered plant development and occasionally are lethal.</text>
</comment>
<feature type="chain" id="PRO_0000330789" description="Transcription factor TCP15">
    <location>
        <begin position="1"/>
        <end position="325"/>
    </location>
</feature>
<feature type="domain" description="TCP" evidence="1">
    <location>
        <begin position="52"/>
        <end position="106"/>
    </location>
</feature>
<feature type="region of interest" description="Disordered" evidence="2">
    <location>
        <begin position="1"/>
        <end position="64"/>
    </location>
</feature>
<feature type="region of interest" description="Disordered" evidence="2">
    <location>
        <begin position="141"/>
        <end position="178"/>
    </location>
</feature>
<feature type="region of interest" description="Disordered" evidence="2">
    <location>
        <begin position="296"/>
        <end position="325"/>
    </location>
</feature>
<feature type="compositionally biased region" description="Low complexity" evidence="2">
    <location>
        <begin position="20"/>
        <end position="36"/>
    </location>
</feature>
<feature type="compositionally biased region" description="Basic and acidic residues" evidence="2">
    <location>
        <begin position="51"/>
        <end position="63"/>
    </location>
</feature>
<feature type="compositionally biased region" description="Polar residues" evidence="2">
    <location>
        <begin position="141"/>
        <end position="153"/>
    </location>
</feature>
<feature type="compositionally biased region" description="Basic and acidic residues" evidence="2">
    <location>
        <begin position="307"/>
        <end position="325"/>
    </location>
</feature>
<feature type="strand" evidence="19">
    <location>
        <begin position="64"/>
        <end position="68"/>
    </location>
</feature>
<feature type="helix" evidence="19">
    <location>
        <begin position="70"/>
        <end position="83"/>
    </location>
</feature>
<feature type="helix" evidence="19">
    <location>
        <begin position="88"/>
        <end position="98"/>
    </location>
</feature>
<feature type="helix" evidence="19">
    <location>
        <begin position="100"/>
        <end position="107"/>
    </location>
</feature>
<keyword id="KW-0002">3D-structure</keyword>
<keyword id="KW-0217">Developmental protein</keyword>
<keyword id="KW-0238">DNA-binding</keyword>
<keyword id="KW-0539">Nucleus</keyword>
<keyword id="KW-1185">Reference proteome</keyword>
<keyword id="KW-0804">Transcription</keyword>
<keyword id="KW-0805">Transcription regulation</keyword>
<evidence type="ECO:0000255" key="1">
    <source>
        <dbReference type="PROSITE-ProRule" id="PRU00701"/>
    </source>
</evidence>
<evidence type="ECO:0000256" key="2">
    <source>
        <dbReference type="SAM" id="MobiDB-lite"/>
    </source>
</evidence>
<evidence type="ECO:0000269" key="3">
    <source>
    </source>
</evidence>
<evidence type="ECO:0000269" key="4">
    <source>
    </source>
</evidence>
<evidence type="ECO:0000269" key="5">
    <source>
    </source>
</evidence>
<evidence type="ECO:0000269" key="6">
    <source>
    </source>
</evidence>
<evidence type="ECO:0000269" key="7">
    <source>
    </source>
</evidence>
<evidence type="ECO:0000269" key="8">
    <source>
    </source>
</evidence>
<evidence type="ECO:0000269" key="9">
    <source>
    </source>
</evidence>
<evidence type="ECO:0000269" key="10">
    <source>
    </source>
</evidence>
<evidence type="ECO:0000269" key="11">
    <source>
    </source>
</evidence>
<evidence type="ECO:0000269" key="12">
    <source>
    </source>
</evidence>
<evidence type="ECO:0000269" key="13">
    <source>
    </source>
</evidence>
<evidence type="ECO:0000303" key="14">
    <source>
    </source>
</evidence>
<evidence type="ECO:0000303" key="15">
    <source>
    </source>
</evidence>
<evidence type="ECO:0000305" key="16"/>
<evidence type="ECO:0000312" key="17">
    <source>
        <dbReference type="Araport" id="AT1G69690"/>
    </source>
</evidence>
<evidence type="ECO:0000312" key="18">
    <source>
        <dbReference type="EMBL" id="AAG52540.1"/>
    </source>
</evidence>
<evidence type="ECO:0007829" key="19">
    <source>
        <dbReference type="PDB" id="7VP6"/>
    </source>
</evidence>
<proteinExistence type="evidence at protein level"/>
<gene>
    <name evidence="14" type="primary">TCP15</name>
    <name evidence="17" type="ordered locus">At1g69690</name>
    <name evidence="18" type="ORF">T6C23.11</name>
</gene>
<sequence>MDPDPDHNHRPNFPLQLLDSSTSSSSTSLAIISTTSEPNSEPKKPPPKRTSTKDRHTKVEGRGRRIRMPAMCAARVFQLTRELGHKSDGETIEWLLQQAEPAVIAATGTGTIPANFTSLNISLRSSRSSLSAAHLRTTPSSYYFHSPHQSMTHHLQHQHQVRPKNESHSSSSSSSQLLDHNQMGNYLVQSTAGSLPTSQSPATAPFWSSGDNTQNLWAFNINPHHSGVVAGDVYNPNSGGSGGGSGVHLMNFAAPIALFSGQPLASGYGGGGGGGGEHSHYGVLAALNAAYRPVAETGNHNNNQQNRDGDHHHNHQEDGSTSHHS</sequence>
<organism>
    <name type="scientific">Arabidopsis thaliana</name>
    <name type="common">Mouse-ear cress</name>
    <dbReference type="NCBI Taxonomy" id="3702"/>
    <lineage>
        <taxon>Eukaryota</taxon>
        <taxon>Viridiplantae</taxon>
        <taxon>Streptophyta</taxon>
        <taxon>Embryophyta</taxon>
        <taxon>Tracheophyta</taxon>
        <taxon>Spermatophyta</taxon>
        <taxon>Magnoliopsida</taxon>
        <taxon>eudicotyledons</taxon>
        <taxon>Gunneridae</taxon>
        <taxon>Pentapetalae</taxon>
        <taxon>rosids</taxon>
        <taxon>malvids</taxon>
        <taxon>Brassicales</taxon>
        <taxon>Brassicaceae</taxon>
        <taxon>Camelineae</taxon>
        <taxon>Arabidopsis</taxon>
    </lineage>
</organism>